<protein>
    <recommendedName>
        <fullName evidence="1">Peptidyl-tRNA hydrolase</fullName>
        <shortName evidence="1">Pth</shortName>
        <ecNumber evidence="1">3.1.1.29</ecNumber>
    </recommendedName>
</protein>
<sequence length="207" mass="22650">MNRGDLRLVVGLGNPGNRYANTRHNVGFMALERLASREGGGFRSMPKLQGQLADLGSGDKRLRLLMPQTFMNDSGRSIRAALDWFGFELHQLLVLVDDMDLPLGRLRLRARGSAGGHNGLKSTIQHLGTQDFARLRIGIGAPGQNPSERKARTVSHVLGSFSRDEEPLLDKVLLEVVDGLERIQLQGLDLAGNHLNGLQLAPTSTEE</sequence>
<comment type="function">
    <text evidence="1">Hydrolyzes ribosome-free peptidyl-tRNAs (with 1 or more amino acids incorporated), which drop off the ribosome during protein synthesis, or as a result of ribosome stalling.</text>
</comment>
<comment type="function">
    <text evidence="1">Catalyzes the release of premature peptidyl moieties from peptidyl-tRNA molecules trapped in stalled 50S ribosomal subunits, and thus maintains levels of free tRNAs and 50S ribosomes.</text>
</comment>
<comment type="catalytic activity">
    <reaction evidence="1">
        <text>an N-acyl-L-alpha-aminoacyl-tRNA + H2O = an N-acyl-L-amino acid + a tRNA + H(+)</text>
        <dbReference type="Rhea" id="RHEA:54448"/>
        <dbReference type="Rhea" id="RHEA-COMP:10123"/>
        <dbReference type="Rhea" id="RHEA-COMP:13883"/>
        <dbReference type="ChEBI" id="CHEBI:15377"/>
        <dbReference type="ChEBI" id="CHEBI:15378"/>
        <dbReference type="ChEBI" id="CHEBI:59874"/>
        <dbReference type="ChEBI" id="CHEBI:78442"/>
        <dbReference type="ChEBI" id="CHEBI:138191"/>
        <dbReference type="EC" id="3.1.1.29"/>
    </reaction>
</comment>
<comment type="subunit">
    <text evidence="1">Monomer.</text>
</comment>
<comment type="subcellular location">
    <subcellularLocation>
        <location evidence="1">Cytoplasm</location>
    </subcellularLocation>
</comment>
<comment type="similarity">
    <text evidence="1">Belongs to the PTH family.</text>
</comment>
<dbReference type="EC" id="3.1.1.29" evidence="1"/>
<dbReference type="EMBL" id="CP000435">
    <property type="protein sequence ID" value="ABI45940.1"/>
    <property type="molecule type" value="Genomic_DNA"/>
</dbReference>
<dbReference type="RefSeq" id="WP_011618289.1">
    <property type="nucleotide sequence ID" value="NC_008319.1"/>
</dbReference>
<dbReference type="SMR" id="Q0IDC6"/>
<dbReference type="STRING" id="64471.sync_0312"/>
<dbReference type="KEGG" id="syg:sync_0312"/>
<dbReference type="eggNOG" id="COG0193">
    <property type="taxonomic scope" value="Bacteria"/>
</dbReference>
<dbReference type="HOGENOM" id="CLU_062456_4_1_3"/>
<dbReference type="OrthoDB" id="9800507at2"/>
<dbReference type="Proteomes" id="UP000001961">
    <property type="component" value="Chromosome"/>
</dbReference>
<dbReference type="GO" id="GO:0005737">
    <property type="term" value="C:cytoplasm"/>
    <property type="evidence" value="ECO:0007669"/>
    <property type="project" value="UniProtKB-SubCell"/>
</dbReference>
<dbReference type="GO" id="GO:0004045">
    <property type="term" value="F:peptidyl-tRNA hydrolase activity"/>
    <property type="evidence" value="ECO:0007669"/>
    <property type="project" value="UniProtKB-UniRule"/>
</dbReference>
<dbReference type="GO" id="GO:0000049">
    <property type="term" value="F:tRNA binding"/>
    <property type="evidence" value="ECO:0007669"/>
    <property type="project" value="UniProtKB-UniRule"/>
</dbReference>
<dbReference type="GO" id="GO:0006515">
    <property type="term" value="P:protein quality control for misfolded or incompletely synthesized proteins"/>
    <property type="evidence" value="ECO:0007669"/>
    <property type="project" value="UniProtKB-UniRule"/>
</dbReference>
<dbReference type="GO" id="GO:0072344">
    <property type="term" value="P:rescue of stalled ribosome"/>
    <property type="evidence" value="ECO:0007669"/>
    <property type="project" value="UniProtKB-UniRule"/>
</dbReference>
<dbReference type="CDD" id="cd00462">
    <property type="entry name" value="PTH"/>
    <property type="match status" value="1"/>
</dbReference>
<dbReference type="FunFam" id="3.40.50.1470:FF:000001">
    <property type="entry name" value="Peptidyl-tRNA hydrolase"/>
    <property type="match status" value="1"/>
</dbReference>
<dbReference type="Gene3D" id="3.40.50.1470">
    <property type="entry name" value="Peptidyl-tRNA hydrolase"/>
    <property type="match status" value="1"/>
</dbReference>
<dbReference type="HAMAP" id="MF_00083">
    <property type="entry name" value="Pept_tRNA_hydro_bact"/>
    <property type="match status" value="1"/>
</dbReference>
<dbReference type="InterPro" id="IPR001328">
    <property type="entry name" value="Pept_tRNA_hydro"/>
</dbReference>
<dbReference type="InterPro" id="IPR018171">
    <property type="entry name" value="Pept_tRNA_hydro_CS"/>
</dbReference>
<dbReference type="InterPro" id="IPR036416">
    <property type="entry name" value="Pept_tRNA_hydro_sf"/>
</dbReference>
<dbReference type="NCBIfam" id="TIGR00447">
    <property type="entry name" value="pth"/>
    <property type="match status" value="1"/>
</dbReference>
<dbReference type="PANTHER" id="PTHR17224">
    <property type="entry name" value="PEPTIDYL-TRNA HYDROLASE"/>
    <property type="match status" value="1"/>
</dbReference>
<dbReference type="PANTHER" id="PTHR17224:SF1">
    <property type="entry name" value="PEPTIDYL-TRNA HYDROLASE"/>
    <property type="match status" value="1"/>
</dbReference>
<dbReference type="Pfam" id="PF01195">
    <property type="entry name" value="Pept_tRNA_hydro"/>
    <property type="match status" value="1"/>
</dbReference>
<dbReference type="SUPFAM" id="SSF53178">
    <property type="entry name" value="Peptidyl-tRNA hydrolase-like"/>
    <property type="match status" value="1"/>
</dbReference>
<dbReference type="PROSITE" id="PS01195">
    <property type="entry name" value="PEPT_TRNA_HYDROL_1"/>
    <property type="match status" value="1"/>
</dbReference>
<dbReference type="PROSITE" id="PS01196">
    <property type="entry name" value="PEPT_TRNA_HYDROL_2"/>
    <property type="match status" value="1"/>
</dbReference>
<reference key="1">
    <citation type="journal article" date="2006" name="Proc. Natl. Acad. Sci. U.S.A.">
        <title>Genome sequence of Synechococcus CC9311: insights into adaptation to a coastal environment.</title>
        <authorList>
            <person name="Palenik B."/>
            <person name="Ren Q."/>
            <person name="Dupont C.L."/>
            <person name="Myers G.S."/>
            <person name="Heidelberg J.F."/>
            <person name="Badger J.H."/>
            <person name="Madupu R."/>
            <person name="Nelson W.C."/>
            <person name="Brinkac L.M."/>
            <person name="Dodson R.J."/>
            <person name="Durkin A.S."/>
            <person name="Daugherty S.C."/>
            <person name="Sullivan S.A."/>
            <person name="Khouri H."/>
            <person name="Mohamoud Y."/>
            <person name="Halpin R."/>
            <person name="Paulsen I.T."/>
        </authorList>
    </citation>
    <scope>NUCLEOTIDE SEQUENCE [LARGE SCALE GENOMIC DNA]</scope>
    <source>
        <strain>CC9311</strain>
    </source>
</reference>
<proteinExistence type="inferred from homology"/>
<name>PTH_SYNS3</name>
<accession>Q0IDC6</accession>
<feature type="chain" id="PRO_0000264123" description="Peptidyl-tRNA hydrolase">
    <location>
        <begin position="1"/>
        <end position="207"/>
    </location>
</feature>
<feature type="active site" description="Proton acceptor" evidence="1">
    <location>
        <position position="24"/>
    </location>
</feature>
<feature type="binding site" evidence="1">
    <location>
        <position position="19"/>
    </location>
    <ligand>
        <name>tRNA</name>
        <dbReference type="ChEBI" id="CHEBI:17843"/>
    </ligand>
</feature>
<feature type="binding site" evidence="1">
    <location>
        <position position="70"/>
    </location>
    <ligand>
        <name>tRNA</name>
        <dbReference type="ChEBI" id="CHEBI:17843"/>
    </ligand>
</feature>
<feature type="binding site" evidence="1">
    <location>
        <position position="72"/>
    </location>
    <ligand>
        <name>tRNA</name>
        <dbReference type="ChEBI" id="CHEBI:17843"/>
    </ligand>
</feature>
<feature type="binding site" evidence="1">
    <location>
        <position position="118"/>
    </location>
    <ligand>
        <name>tRNA</name>
        <dbReference type="ChEBI" id="CHEBI:17843"/>
    </ligand>
</feature>
<feature type="site" description="Discriminates between blocked and unblocked aminoacyl-tRNA" evidence="1">
    <location>
        <position position="14"/>
    </location>
</feature>
<feature type="site" description="Stabilizes the basic form of H active site to accept a proton" evidence="1">
    <location>
        <position position="97"/>
    </location>
</feature>
<organism>
    <name type="scientific">Synechococcus sp. (strain CC9311)</name>
    <dbReference type="NCBI Taxonomy" id="64471"/>
    <lineage>
        <taxon>Bacteria</taxon>
        <taxon>Bacillati</taxon>
        <taxon>Cyanobacteriota</taxon>
        <taxon>Cyanophyceae</taxon>
        <taxon>Synechococcales</taxon>
        <taxon>Synechococcaceae</taxon>
        <taxon>Synechococcus</taxon>
    </lineage>
</organism>
<gene>
    <name evidence="1" type="primary">pth</name>
    <name type="ordered locus">sync_0312</name>
</gene>
<keyword id="KW-0963">Cytoplasm</keyword>
<keyword id="KW-0378">Hydrolase</keyword>
<keyword id="KW-1185">Reference proteome</keyword>
<keyword id="KW-0694">RNA-binding</keyword>
<keyword id="KW-0820">tRNA-binding</keyword>
<evidence type="ECO:0000255" key="1">
    <source>
        <dbReference type="HAMAP-Rule" id="MF_00083"/>
    </source>
</evidence>